<comment type="function">
    <text evidence="1">Catalyzes the 2-thiolation of uridine at the wobble position (U34) of tRNA, leading to the formation of s(2)U34.</text>
</comment>
<comment type="catalytic activity">
    <reaction evidence="1">
        <text>S-sulfanyl-L-cysteinyl-[protein] + uridine(34) in tRNA + AH2 + ATP = 2-thiouridine(34) in tRNA + L-cysteinyl-[protein] + A + AMP + diphosphate + H(+)</text>
        <dbReference type="Rhea" id="RHEA:47032"/>
        <dbReference type="Rhea" id="RHEA-COMP:10131"/>
        <dbReference type="Rhea" id="RHEA-COMP:11726"/>
        <dbReference type="Rhea" id="RHEA-COMP:11727"/>
        <dbReference type="Rhea" id="RHEA-COMP:11728"/>
        <dbReference type="ChEBI" id="CHEBI:13193"/>
        <dbReference type="ChEBI" id="CHEBI:15378"/>
        <dbReference type="ChEBI" id="CHEBI:17499"/>
        <dbReference type="ChEBI" id="CHEBI:29950"/>
        <dbReference type="ChEBI" id="CHEBI:30616"/>
        <dbReference type="ChEBI" id="CHEBI:33019"/>
        <dbReference type="ChEBI" id="CHEBI:61963"/>
        <dbReference type="ChEBI" id="CHEBI:65315"/>
        <dbReference type="ChEBI" id="CHEBI:87170"/>
        <dbReference type="ChEBI" id="CHEBI:456215"/>
        <dbReference type="EC" id="2.8.1.13"/>
    </reaction>
</comment>
<comment type="subcellular location">
    <subcellularLocation>
        <location evidence="1">Cytoplasm</location>
    </subcellularLocation>
</comment>
<comment type="similarity">
    <text evidence="1">Belongs to the MnmA/TRMU family.</text>
</comment>
<dbReference type="EC" id="2.8.1.13" evidence="1"/>
<dbReference type="EMBL" id="CP000812">
    <property type="protein sequence ID" value="ABV33412.1"/>
    <property type="molecule type" value="Genomic_DNA"/>
</dbReference>
<dbReference type="SMR" id="A8F5H8"/>
<dbReference type="STRING" id="416591.Tlet_0846"/>
<dbReference type="KEGG" id="tle:Tlet_0846"/>
<dbReference type="eggNOG" id="COG0482">
    <property type="taxonomic scope" value="Bacteria"/>
</dbReference>
<dbReference type="HOGENOM" id="CLU_035188_0_0_0"/>
<dbReference type="OrthoDB" id="9800696at2"/>
<dbReference type="Proteomes" id="UP000002016">
    <property type="component" value="Chromosome"/>
</dbReference>
<dbReference type="GO" id="GO:0005737">
    <property type="term" value="C:cytoplasm"/>
    <property type="evidence" value="ECO:0007669"/>
    <property type="project" value="UniProtKB-SubCell"/>
</dbReference>
<dbReference type="GO" id="GO:0005524">
    <property type="term" value="F:ATP binding"/>
    <property type="evidence" value="ECO:0007669"/>
    <property type="project" value="UniProtKB-KW"/>
</dbReference>
<dbReference type="GO" id="GO:0000049">
    <property type="term" value="F:tRNA binding"/>
    <property type="evidence" value="ECO:0007669"/>
    <property type="project" value="UniProtKB-KW"/>
</dbReference>
<dbReference type="GO" id="GO:0103016">
    <property type="term" value="F:tRNA-uridine 2-sulfurtransferase activity"/>
    <property type="evidence" value="ECO:0007669"/>
    <property type="project" value="UniProtKB-EC"/>
</dbReference>
<dbReference type="GO" id="GO:0002143">
    <property type="term" value="P:tRNA wobble position uridine thiolation"/>
    <property type="evidence" value="ECO:0007669"/>
    <property type="project" value="TreeGrafter"/>
</dbReference>
<dbReference type="CDD" id="cd01998">
    <property type="entry name" value="MnmA_TRMU-like"/>
    <property type="match status" value="1"/>
</dbReference>
<dbReference type="FunFam" id="3.40.50.620:FF:000302">
    <property type="entry name" value="tRNA-specific 2-thiouridylase MnmA"/>
    <property type="match status" value="1"/>
</dbReference>
<dbReference type="Gene3D" id="2.30.30.280">
    <property type="entry name" value="Adenine nucleotide alpha hydrolases-like domains"/>
    <property type="match status" value="1"/>
</dbReference>
<dbReference type="Gene3D" id="3.40.50.620">
    <property type="entry name" value="HUPs"/>
    <property type="match status" value="1"/>
</dbReference>
<dbReference type="Gene3D" id="2.40.30.10">
    <property type="entry name" value="Translation factors"/>
    <property type="match status" value="1"/>
</dbReference>
<dbReference type="HAMAP" id="MF_00144">
    <property type="entry name" value="tRNA_thiouridyl_MnmA"/>
    <property type="match status" value="1"/>
</dbReference>
<dbReference type="InterPro" id="IPR004506">
    <property type="entry name" value="MnmA-like"/>
</dbReference>
<dbReference type="InterPro" id="IPR046885">
    <property type="entry name" value="MnmA-like_C"/>
</dbReference>
<dbReference type="InterPro" id="IPR046884">
    <property type="entry name" value="MnmA-like_central"/>
</dbReference>
<dbReference type="InterPro" id="IPR023382">
    <property type="entry name" value="MnmA-like_central_sf"/>
</dbReference>
<dbReference type="InterPro" id="IPR014729">
    <property type="entry name" value="Rossmann-like_a/b/a_fold"/>
</dbReference>
<dbReference type="NCBIfam" id="NF001138">
    <property type="entry name" value="PRK00143.1"/>
    <property type="match status" value="1"/>
</dbReference>
<dbReference type="NCBIfam" id="TIGR00420">
    <property type="entry name" value="trmU"/>
    <property type="match status" value="1"/>
</dbReference>
<dbReference type="PANTHER" id="PTHR11933:SF5">
    <property type="entry name" value="MITOCHONDRIAL TRNA-SPECIFIC 2-THIOURIDYLASE 1"/>
    <property type="match status" value="1"/>
</dbReference>
<dbReference type="PANTHER" id="PTHR11933">
    <property type="entry name" value="TRNA 5-METHYLAMINOMETHYL-2-THIOURIDYLATE -METHYLTRANSFERASE"/>
    <property type="match status" value="1"/>
</dbReference>
<dbReference type="Pfam" id="PF03054">
    <property type="entry name" value="tRNA_Me_trans"/>
    <property type="match status" value="1"/>
</dbReference>
<dbReference type="Pfam" id="PF20258">
    <property type="entry name" value="tRNA_Me_trans_C"/>
    <property type="match status" value="1"/>
</dbReference>
<dbReference type="Pfam" id="PF20259">
    <property type="entry name" value="tRNA_Me_trans_M"/>
    <property type="match status" value="1"/>
</dbReference>
<dbReference type="SUPFAM" id="SSF52402">
    <property type="entry name" value="Adenine nucleotide alpha hydrolases-like"/>
    <property type="match status" value="1"/>
</dbReference>
<name>MNMA_PSELT</name>
<proteinExistence type="inferred from homology"/>
<gene>
    <name evidence="1" type="primary">mnmA</name>
    <name type="ordered locus">Tlet_0846</name>
</gene>
<keyword id="KW-0067">ATP-binding</keyword>
<keyword id="KW-0963">Cytoplasm</keyword>
<keyword id="KW-1015">Disulfide bond</keyword>
<keyword id="KW-0547">Nucleotide-binding</keyword>
<keyword id="KW-1185">Reference proteome</keyword>
<keyword id="KW-0694">RNA-binding</keyword>
<keyword id="KW-0808">Transferase</keyword>
<keyword id="KW-0819">tRNA processing</keyword>
<keyword id="KW-0820">tRNA-binding</keyword>
<accession>A8F5H8</accession>
<feature type="chain" id="PRO_0000349844" description="tRNA-specific 2-thiouridylase MnmA">
    <location>
        <begin position="1"/>
        <end position="349"/>
    </location>
</feature>
<feature type="region of interest" description="Interaction with tRNA" evidence="1">
    <location>
        <begin position="145"/>
        <end position="147"/>
    </location>
</feature>
<feature type="active site" description="Nucleophile" evidence="1">
    <location>
        <position position="103"/>
    </location>
</feature>
<feature type="active site" description="Cysteine persulfide intermediate" evidence="1">
    <location>
        <position position="195"/>
    </location>
</feature>
<feature type="binding site" evidence="1">
    <location>
        <begin position="6"/>
        <end position="13"/>
    </location>
    <ligand>
        <name>ATP</name>
        <dbReference type="ChEBI" id="CHEBI:30616"/>
    </ligand>
</feature>
<feature type="binding site" evidence="1">
    <location>
        <position position="32"/>
    </location>
    <ligand>
        <name>ATP</name>
        <dbReference type="ChEBI" id="CHEBI:30616"/>
    </ligand>
</feature>
<feature type="binding site" evidence="1">
    <location>
        <position position="127"/>
    </location>
    <ligand>
        <name>ATP</name>
        <dbReference type="ChEBI" id="CHEBI:30616"/>
    </ligand>
</feature>
<feature type="site" description="Interaction with tRNA" evidence="1">
    <location>
        <position position="128"/>
    </location>
</feature>
<feature type="site" description="Interaction with tRNA" evidence="1">
    <location>
        <position position="329"/>
    </location>
</feature>
<feature type="disulfide bond" description="Alternate" evidence="1">
    <location>
        <begin position="103"/>
        <end position="195"/>
    </location>
</feature>
<protein>
    <recommendedName>
        <fullName evidence="1">tRNA-specific 2-thiouridylase MnmA</fullName>
        <ecNumber evidence="1">2.8.1.13</ecNumber>
    </recommendedName>
</protein>
<evidence type="ECO:0000255" key="1">
    <source>
        <dbReference type="HAMAP-Rule" id="MF_00144"/>
    </source>
</evidence>
<sequence>MKIGILLSGGVDSAVALYQLKNEGYEIVAYHMKTMKDEFFLNRQVKHKICCSPSDTVDAKLIAKTAGVPLKVVNLHEIFKEKIITYYLQEYTRGRTPNPCYFCNRFIKFGYLMDLMIEDGVDVISSGHYARVVDGKLLKALDKEKDQSYFLASIEKERLKKIVFPNGDKTKDEIRDIAKKAGIHVHSKAESQDLCFIPDGDQKRFFEEQGIKIKSGPIFDKYGKKIGEHTGLINYTIGQRKIGVSAGERVYVTRICADRNALIVGNEKDVQSDKFSVIDFNLLVDIDKNFEATVKVRKNSTEVPCKVSLENHRVIVKTTMPVFAVAPGQAAVFYRGDIVIGAGIIEKIL</sequence>
<organism>
    <name type="scientific">Pseudothermotoga lettingae (strain ATCC BAA-301 / DSM 14385 / NBRC 107922 / TMO)</name>
    <name type="common">Thermotoga lettingae</name>
    <dbReference type="NCBI Taxonomy" id="416591"/>
    <lineage>
        <taxon>Bacteria</taxon>
        <taxon>Thermotogati</taxon>
        <taxon>Thermotogota</taxon>
        <taxon>Thermotogae</taxon>
        <taxon>Thermotogales</taxon>
        <taxon>Thermotogaceae</taxon>
        <taxon>Pseudothermotoga</taxon>
    </lineage>
</organism>
<reference key="1">
    <citation type="submission" date="2007-08" db="EMBL/GenBank/DDBJ databases">
        <title>Complete sequence of Thermotoga lettingae TMO.</title>
        <authorList>
            <consortium name="US DOE Joint Genome Institute"/>
            <person name="Copeland A."/>
            <person name="Lucas S."/>
            <person name="Lapidus A."/>
            <person name="Barry K."/>
            <person name="Glavina del Rio T."/>
            <person name="Dalin E."/>
            <person name="Tice H."/>
            <person name="Pitluck S."/>
            <person name="Foster B."/>
            <person name="Bruce D."/>
            <person name="Schmutz J."/>
            <person name="Larimer F."/>
            <person name="Land M."/>
            <person name="Hauser L."/>
            <person name="Kyrpides N."/>
            <person name="Mikhailova N."/>
            <person name="Nelson K."/>
            <person name="Gogarten J.P."/>
            <person name="Noll K."/>
            <person name="Richardson P."/>
        </authorList>
    </citation>
    <scope>NUCLEOTIDE SEQUENCE [LARGE SCALE GENOMIC DNA]</scope>
    <source>
        <strain>ATCC BAA-301 / DSM 14385 / NBRC 107922 / TMO</strain>
    </source>
</reference>